<dbReference type="EC" id="2.7.7.-" evidence="1"/>
<dbReference type="EC" id="2.7.7.108" evidence="1"/>
<dbReference type="EMBL" id="CP000151">
    <property type="protein sequence ID" value="ABB08803.1"/>
    <property type="status" value="ALT_INIT"/>
    <property type="molecule type" value="Genomic_DNA"/>
</dbReference>
<dbReference type="RefSeq" id="WP_041492869.1">
    <property type="nucleotide sequence ID" value="NC_007510.1"/>
</dbReference>
<dbReference type="SMR" id="Q39FG3"/>
<dbReference type="GeneID" id="45095085"/>
<dbReference type="KEGG" id="bur:Bcep18194_A5209"/>
<dbReference type="PATRIC" id="fig|482957.22.peg.2148"/>
<dbReference type="HOGENOM" id="CLU_010245_4_0_4"/>
<dbReference type="Proteomes" id="UP000002705">
    <property type="component" value="Chromosome 1"/>
</dbReference>
<dbReference type="GO" id="GO:0070733">
    <property type="term" value="F:AMPylase activity"/>
    <property type="evidence" value="ECO:0007669"/>
    <property type="project" value="RHEA"/>
</dbReference>
<dbReference type="GO" id="GO:0005524">
    <property type="term" value="F:ATP binding"/>
    <property type="evidence" value="ECO:0007669"/>
    <property type="project" value="UniProtKB-UniRule"/>
</dbReference>
<dbReference type="GO" id="GO:0000287">
    <property type="term" value="F:magnesium ion binding"/>
    <property type="evidence" value="ECO:0007669"/>
    <property type="project" value="UniProtKB-UniRule"/>
</dbReference>
<dbReference type="HAMAP" id="MF_00692">
    <property type="entry name" value="YdiU_SelO"/>
    <property type="match status" value="1"/>
</dbReference>
<dbReference type="InterPro" id="IPR003846">
    <property type="entry name" value="SelO"/>
</dbReference>
<dbReference type="NCBIfam" id="NF000658">
    <property type="entry name" value="PRK00029.1"/>
    <property type="match status" value="1"/>
</dbReference>
<dbReference type="PANTHER" id="PTHR32057">
    <property type="entry name" value="PROTEIN ADENYLYLTRANSFERASE SELO, MITOCHONDRIAL"/>
    <property type="match status" value="1"/>
</dbReference>
<dbReference type="PANTHER" id="PTHR32057:SF14">
    <property type="entry name" value="PROTEIN ADENYLYLTRANSFERASE SELO, MITOCHONDRIAL"/>
    <property type="match status" value="1"/>
</dbReference>
<dbReference type="Pfam" id="PF02696">
    <property type="entry name" value="SelO"/>
    <property type="match status" value="1"/>
</dbReference>
<comment type="function">
    <text evidence="1">Nucleotidyltransferase involved in the post-translational modification of proteins. It can catalyze the addition of adenosine monophosphate (AMP) or uridine monophosphate (UMP) to a protein, resulting in modifications known as AMPylation and UMPylation.</text>
</comment>
<comment type="catalytic activity">
    <reaction evidence="1">
        <text>L-seryl-[protein] + ATP = 3-O-(5'-adenylyl)-L-seryl-[protein] + diphosphate</text>
        <dbReference type="Rhea" id="RHEA:58120"/>
        <dbReference type="Rhea" id="RHEA-COMP:9863"/>
        <dbReference type="Rhea" id="RHEA-COMP:15073"/>
        <dbReference type="ChEBI" id="CHEBI:29999"/>
        <dbReference type="ChEBI" id="CHEBI:30616"/>
        <dbReference type="ChEBI" id="CHEBI:33019"/>
        <dbReference type="ChEBI" id="CHEBI:142516"/>
        <dbReference type="EC" id="2.7.7.108"/>
    </reaction>
</comment>
<comment type="catalytic activity">
    <reaction evidence="1">
        <text>L-threonyl-[protein] + ATP = 3-O-(5'-adenylyl)-L-threonyl-[protein] + diphosphate</text>
        <dbReference type="Rhea" id="RHEA:54292"/>
        <dbReference type="Rhea" id="RHEA-COMP:11060"/>
        <dbReference type="Rhea" id="RHEA-COMP:13847"/>
        <dbReference type="ChEBI" id="CHEBI:30013"/>
        <dbReference type="ChEBI" id="CHEBI:30616"/>
        <dbReference type="ChEBI" id="CHEBI:33019"/>
        <dbReference type="ChEBI" id="CHEBI:138113"/>
        <dbReference type="EC" id="2.7.7.108"/>
    </reaction>
</comment>
<comment type="catalytic activity">
    <reaction evidence="1">
        <text>L-tyrosyl-[protein] + ATP = O-(5'-adenylyl)-L-tyrosyl-[protein] + diphosphate</text>
        <dbReference type="Rhea" id="RHEA:54288"/>
        <dbReference type="Rhea" id="RHEA-COMP:10136"/>
        <dbReference type="Rhea" id="RHEA-COMP:13846"/>
        <dbReference type="ChEBI" id="CHEBI:30616"/>
        <dbReference type="ChEBI" id="CHEBI:33019"/>
        <dbReference type="ChEBI" id="CHEBI:46858"/>
        <dbReference type="ChEBI" id="CHEBI:83624"/>
        <dbReference type="EC" id="2.7.7.108"/>
    </reaction>
</comment>
<comment type="catalytic activity">
    <reaction evidence="1">
        <text>L-histidyl-[protein] + UTP = N(tele)-(5'-uridylyl)-L-histidyl-[protein] + diphosphate</text>
        <dbReference type="Rhea" id="RHEA:83891"/>
        <dbReference type="Rhea" id="RHEA-COMP:9745"/>
        <dbReference type="Rhea" id="RHEA-COMP:20239"/>
        <dbReference type="ChEBI" id="CHEBI:29979"/>
        <dbReference type="ChEBI" id="CHEBI:33019"/>
        <dbReference type="ChEBI" id="CHEBI:46398"/>
        <dbReference type="ChEBI" id="CHEBI:233474"/>
    </reaction>
</comment>
<comment type="catalytic activity">
    <reaction evidence="1">
        <text>L-seryl-[protein] + UTP = O-(5'-uridylyl)-L-seryl-[protein] + diphosphate</text>
        <dbReference type="Rhea" id="RHEA:64604"/>
        <dbReference type="Rhea" id="RHEA-COMP:9863"/>
        <dbReference type="Rhea" id="RHEA-COMP:16635"/>
        <dbReference type="ChEBI" id="CHEBI:29999"/>
        <dbReference type="ChEBI" id="CHEBI:33019"/>
        <dbReference type="ChEBI" id="CHEBI:46398"/>
        <dbReference type="ChEBI" id="CHEBI:156051"/>
    </reaction>
</comment>
<comment type="catalytic activity">
    <reaction evidence="1">
        <text>L-tyrosyl-[protein] + UTP = O-(5'-uridylyl)-L-tyrosyl-[protein] + diphosphate</text>
        <dbReference type="Rhea" id="RHEA:83887"/>
        <dbReference type="Rhea" id="RHEA-COMP:10136"/>
        <dbReference type="Rhea" id="RHEA-COMP:20238"/>
        <dbReference type="ChEBI" id="CHEBI:33019"/>
        <dbReference type="ChEBI" id="CHEBI:46398"/>
        <dbReference type="ChEBI" id="CHEBI:46858"/>
        <dbReference type="ChEBI" id="CHEBI:90602"/>
    </reaction>
</comment>
<comment type="cofactor">
    <cofactor evidence="1">
        <name>Mg(2+)</name>
        <dbReference type="ChEBI" id="CHEBI:18420"/>
    </cofactor>
    <cofactor evidence="1">
        <name>Mn(2+)</name>
        <dbReference type="ChEBI" id="CHEBI:29035"/>
    </cofactor>
</comment>
<comment type="similarity">
    <text evidence="1">Belongs to the SELO family.</text>
</comment>
<comment type="sequence caution" evidence="2">
    <conflict type="erroneous initiation">
        <sequence resource="EMBL-CDS" id="ABB08803"/>
    </conflict>
</comment>
<name>SELO_BURL3</name>
<evidence type="ECO:0000255" key="1">
    <source>
        <dbReference type="HAMAP-Rule" id="MF_00692"/>
    </source>
</evidence>
<evidence type="ECO:0000305" key="2"/>
<accession>Q39FG3</accession>
<sequence length="522" mass="57745">MSFSRSAADAADTLPDLAATLGEPAVGAFVTLGDAFHTRLPAAPLAAPYVVGFSGEVAQLLDLPPSIAAQPGFAELFAGNPTRDWPANAMPYASVYSGHQFGVWAGQLGDGRALTIGERTGTDGRRYELQLKGSGRTPYSRMGDGRAVLRSSIREFLCSEAMHHLGIPTTRALTVIGSDQPVVREEIETSAVVTRVSESFVRFGHFEHFFSNDRPDLLRQLADHVIDRFYPECRRADDPYLALLEAATLRTADLVAQWQAVGFCHGVMNTDNMSILGVTIDYGPFGFVDAFDANHICNHSDTSGRYAYRMQPRIAHWNCYCLAQALLPLIGLQHGIDDDDARAERAVEDAQAVLAKFPERFGPALERAMRAKLGLELERESDAELANKLLETMHASHADFTLTFRRLAQISKHDASRDAPVRDLFIDRDAFDAWANLYRARLSEETRDDAARAAAMNRVNPKYVLRNHLAEVAIRRAKEKDFSEVERLAQILRRPFDEQPEHEAYAALPPDWAGSLEVSCSS</sequence>
<reference key="1">
    <citation type="submission" date="2005-10" db="EMBL/GenBank/DDBJ databases">
        <title>Complete sequence of chromosome 1 of Burkholderia sp. 383.</title>
        <authorList>
            <consortium name="US DOE Joint Genome Institute"/>
            <person name="Copeland A."/>
            <person name="Lucas S."/>
            <person name="Lapidus A."/>
            <person name="Barry K."/>
            <person name="Detter J.C."/>
            <person name="Glavina T."/>
            <person name="Hammon N."/>
            <person name="Israni S."/>
            <person name="Pitluck S."/>
            <person name="Chain P."/>
            <person name="Malfatti S."/>
            <person name="Shin M."/>
            <person name="Vergez L."/>
            <person name="Schmutz J."/>
            <person name="Larimer F."/>
            <person name="Land M."/>
            <person name="Kyrpides N."/>
            <person name="Lykidis A."/>
            <person name="Richardson P."/>
        </authorList>
    </citation>
    <scope>NUCLEOTIDE SEQUENCE [LARGE SCALE GENOMIC DNA]</scope>
    <source>
        <strain>ATCC 17760 / DSM 23089 / LMG 22485 / NCIMB 9086 / R18194 / 383</strain>
    </source>
</reference>
<organism>
    <name type="scientific">Burkholderia lata (strain ATCC 17760 / DSM 23089 / LMG 22485 / NCIMB 9086 / R18194 / 383)</name>
    <dbReference type="NCBI Taxonomy" id="482957"/>
    <lineage>
        <taxon>Bacteria</taxon>
        <taxon>Pseudomonadati</taxon>
        <taxon>Pseudomonadota</taxon>
        <taxon>Betaproteobacteria</taxon>
        <taxon>Burkholderiales</taxon>
        <taxon>Burkholderiaceae</taxon>
        <taxon>Burkholderia</taxon>
        <taxon>Burkholderia cepacia complex</taxon>
    </lineage>
</organism>
<gene>
    <name evidence="1" type="primary">ydiU</name>
    <name evidence="1" type="synonym">selO</name>
    <name type="ordered locus">Bcep18194_A5209</name>
</gene>
<proteinExistence type="inferred from homology"/>
<keyword id="KW-0067">ATP-binding</keyword>
<keyword id="KW-0460">Magnesium</keyword>
<keyword id="KW-0464">Manganese</keyword>
<keyword id="KW-0479">Metal-binding</keyword>
<keyword id="KW-0547">Nucleotide-binding</keyword>
<keyword id="KW-0548">Nucleotidyltransferase</keyword>
<keyword id="KW-0808">Transferase</keyword>
<feature type="chain" id="PRO_0000271815" description="Protein nucleotidyltransferase YdiU">
    <location>
        <begin position="1"/>
        <end position="522"/>
    </location>
</feature>
<feature type="active site" description="Proton acceptor" evidence="1">
    <location>
        <position position="271"/>
    </location>
</feature>
<feature type="binding site" evidence="1">
    <location>
        <position position="109"/>
    </location>
    <ligand>
        <name>ATP</name>
        <dbReference type="ChEBI" id="CHEBI:30616"/>
    </ligand>
</feature>
<feature type="binding site" evidence="1">
    <location>
        <position position="111"/>
    </location>
    <ligand>
        <name>ATP</name>
        <dbReference type="ChEBI" id="CHEBI:30616"/>
    </ligand>
</feature>
<feature type="binding site" evidence="1">
    <location>
        <position position="112"/>
    </location>
    <ligand>
        <name>ATP</name>
        <dbReference type="ChEBI" id="CHEBI:30616"/>
    </ligand>
</feature>
<feature type="binding site" evidence="1">
    <location>
        <position position="132"/>
    </location>
    <ligand>
        <name>ATP</name>
        <dbReference type="ChEBI" id="CHEBI:30616"/>
    </ligand>
</feature>
<feature type="binding site" evidence="1">
    <location>
        <position position="144"/>
    </location>
    <ligand>
        <name>ATP</name>
        <dbReference type="ChEBI" id="CHEBI:30616"/>
    </ligand>
</feature>
<feature type="binding site" evidence="1">
    <location>
        <position position="145"/>
    </location>
    <ligand>
        <name>ATP</name>
        <dbReference type="ChEBI" id="CHEBI:30616"/>
    </ligand>
</feature>
<feature type="binding site" evidence="1">
    <location>
        <position position="195"/>
    </location>
    <ligand>
        <name>ATP</name>
        <dbReference type="ChEBI" id="CHEBI:30616"/>
    </ligand>
</feature>
<feature type="binding site" evidence="1">
    <location>
        <position position="202"/>
    </location>
    <ligand>
        <name>ATP</name>
        <dbReference type="ChEBI" id="CHEBI:30616"/>
    </ligand>
</feature>
<feature type="binding site" evidence="1">
    <location>
        <position position="272"/>
    </location>
    <ligand>
        <name>Mg(2+)</name>
        <dbReference type="ChEBI" id="CHEBI:18420"/>
    </ligand>
</feature>
<feature type="binding site" evidence="1">
    <location>
        <position position="281"/>
    </location>
    <ligand>
        <name>ATP</name>
        <dbReference type="ChEBI" id="CHEBI:30616"/>
    </ligand>
</feature>
<feature type="binding site" evidence="1">
    <location>
        <position position="281"/>
    </location>
    <ligand>
        <name>Mg(2+)</name>
        <dbReference type="ChEBI" id="CHEBI:18420"/>
    </ligand>
</feature>
<protein>
    <recommendedName>
        <fullName evidence="1">Protein nucleotidyltransferase YdiU</fullName>
        <ecNumber evidence="1">2.7.7.-</ecNumber>
    </recommendedName>
    <alternativeName>
        <fullName evidence="1">Protein adenylyltransferase YdiU</fullName>
        <ecNumber evidence="1">2.7.7.108</ecNumber>
    </alternativeName>
    <alternativeName>
        <fullName evidence="1">Protein uridylyltransferase YdiU</fullName>
        <ecNumber evidence="1">2.7.7.-</ecNumber>
    </alternativeName>
</protein>